<gene>
    <name type="ORF">Y73F4A.2</name>
</gene>
<keyword id="KW-0325">Glycoprotein</keyword>
<keyword id="KW-1185">Reference proteome</keyword>
<keyword id="KW-0964">Secreted</keyword>
<keyword id="KW-0732">Signal</keyword>
<dbReference type="EMBL" id="AL032661">
    <property type="protein sequence ID" value="CAA21754.1"/>
    <property type="molecule type" value="Genomic_DNA"/>
</dbReference>
<dbReference type="PIR" id="T27366">
    <property type="entry name" value="T27366"/>
</dbReference>
<dbReference type="RefSeq" id="NP_501573.1">
    <property type="nucleotide sequence ID" value="NM_069172.8"/>
</dbReference>
<dbReference type="BioGRID" id="42828">
    <property type="interactions" value="3"/>
</dbReference>
<dbReference type="FunCoup" id="Q9XWC3">
    <property type="interactions" value="421"/>
</dbReference>
<dbReference type="STRING" id="6239.Y73F4A.2.1"/>
<dbReference type="iPTMnet" id="Q9XWC3"/>
<dbReference type="PaxDb" id="6239-Y73F4A.2"/>
<dbReference type="PeptideAtlas" id="Q9XWC3"/>
<dbReference type="EnsemblMetazoa" id="Y73F4A.2.1">
    <property type="protein sequence ID" value="Y73F4A.2.1"/>
    <property type="gene ID" value="WBGene00013515"/>
</dbReference>
<dbReference type="GeneID" id="177722"/>
<dbReference type="KEGG" id="cel:CELE_Y73F4A.2"/>
<dbReference type="UCSC" id="Y73F4A.2">
    <property type="organism name" value="c. elegans"/>
</dbReference>
<dbReference type="AGR" id="WB:WBGene00013515"/>
<dbReference type="CTD" id="177722"/>
<dbReference type="WormBase" id="Y73F4A.2">
    <property type="protein sequence ID" value="CE20368"/>
    <property type="gene ID" value="WBGene00013515"/>
</dbReference>
<dbReference type="eggNOG" id="ENOG502TGCS">
    <property type="taxonomic scope" value="Eukaryota"/>
</dbReference>
<dbReference type="GeneTree" id="ENSGT00970000196050"/>
<dbReference type="HOGENOM" id="CLU_1628544_0_0_1"/>
<dbReference type="InParanoid" id="Q9XWC3"/>
<dbReference type="OMA" id="KVCPMEC"/>
<dbReference type="OrthoDB" id="5773714at2759"/>
<dbReference type="PhylomeDB" id="Q9XWC3"/>
<dbReference type="PRO" id="PR:Q9XWC3"/>
<dbReference type="Proteomes" id="UP000001940">
    <property type="component" value="Chromosome IV"/>
</dbReference>
<dbReference type="Bgee" id="WBGene00013515">
    <property type="expression patterns" value="Expressed in larva and 4 other cell types or tissues"/>
</dbReference>
<dbReference type="GO" id="GO:0005576">
    <property type="term" value="C:extracellular region"/>
    <property type="evidence" value="ECO:0007669"/>
    <property type="project" value="UniProtKB-SubCell"/>
</dbReference>
<dbReference type="InterPro" id="IPR005018">
    <property type="entry name" value="DOMON_domain"/>
</dbReference>
<dbReference type="PANTHER" id="PTHR36516:SF3">
    <property type="entry name" value="DOMON DOMAIN-CONTAINING PROTEIN Y73F4A.2"/>
    <property type="match status" value="1"/>
</dbReference>
<dbReference type="PANTHER" id="PTHR36516">
    <property type="entry name" value="PROTEIN CBG04168-RELATED"/>
    <property type="match status" value="1"/>
</dbReference>
<dbReference type="Pfam" id="PF03351">
    <property type="entry name" value="DOMON"/>
    <property type="match status" value="1"/>
</dbReference>
<dbReference type="PROSITE" id="PS50836">
    <property type="entry name" value="DOMON"/>
    <property type="match status" value="1"/>
</dbReference>
<proteinExistence type="evidence at protein level"/>
<name>DMON1_CAEEL</name>
<sequence length="168" mass="18874">MFRSIAVLSALLFAFASAKTCKYDSSDFEVYWRFANNSINMQFMNTDIKNNEWTGVGFGDDKNNFVGVFFMVSNNQVTVRTGSTTQHGPPTFTQSGTNTASVSTQALNYFPEDKTMSAVVQIPIQFNGRSLQSCQKWRFVKSGKIENGQLTRNDKSPKEKKVCPMECN</sequence>
<comment type="subcellular location">
    <subcellularLocation>
        <location evidence="6">Secreted</location>
    </subcellularLocation>
</comment>
<reference key="1">
    <citation type="journal article" date="1998" name="Science">
        <title>Genome sequence of the nematode C. elegans: a platform for investigating biology.</title>
        <authorList>
            <consortium name="The C. elegans sequencing consortium"/>
        </authorList>
    </citation>
    <scope>NUCLEOTIDE SEQUENCE [LARGE SCALE GENOMIC DNA]</scope>
    <source>
        <strain>Bristol N2</strain>
    </source>
</reference>
<reference key="2">
    <citation type="journal article" date="2003" name="Nat. Biotechnol.">
        <title>Lectin affinity capture, isotope-coded tagging and mass spectrometry to identify N-linked glycoproteins.</title>
        <authorList>
            <person name="Kaji H."/>
            <person name="Saito H."/>
            <person name="Yamauchi Y."/>
            <person name="Shinkawa T."/>
            <person name="Taoka M."/>
            <person name="Hirabayashi J."/>
            <person name="Kasai K."/>
            <person name="Takahashi N."/>
            <person name="Isobe T."/>
        </authorList>
    </citation>
    <scope>GLYCOSYLATION [LARGE SCALE ANALYSIS] AT ASN-36</scope>
    <scope>IDENTIFICATION BY MASS SPECTROMETRY</scope>
    <source>
        <strain>Bristol N2</strain>
    </source>
</reference>
<reference key="3">
    <citation type="journal article" date="2007" name="Mol. Cell. Proteomics">
        <title>Proteomics reveals N-linked glycoprotein diversity in Caenorhabditis elegans and suggests an atypical translocation mechanism for integral membrane proteins.</title>
        <authorList>
            <person name="Kaji H."/>
            <person name="Kamiie J."/>
            <person name="Kawakami H."/>
            <person name="Kido K."/>
            <person name="Yamauchi Y."/>
            <person name="Shinkawa T."/>
            <person name="Taoka M."/>
            <person name="Takahashi N."/>
            <person name="Isobe T."/>
        </authorList>
    </citation>
    <scope>GLYCOSYLATION [LARGE SCALE ANALYSIS] AT ASN-36</scope>
    <scope>IDENTIFICATION BY MASS SPECTROMETRY</scope>
    <source>
        <strain>Bristol N2</strain>
    </source>
</reference>
<accession>Q9XWC3</accession>
<protein>
    <recommendedName>
        <fullName>DOMON domain-containing protein Y73F4A.2</fullName>
    </recommendedName>
</protein>
<feature type="signal peptide" evidence="1">
    <location>
        <begin position="1"/>
        <end position="18"/>
    </location>
</feature>
<feature type="chain" id="PRO_0000248563" description="DOMON domain-containing protein Y73F4A.2">
    <location>
        <begin position="19"/>
        <end position="168"/>
    </location>
</feature>
<feature type="domain" description="DOMON" evidence="2">
    <location>
        <begin position="26"/>
        <end position="143"/>
    </location>
</feature>
<feature type="region of interest" description="Disordered" evidence="3">
    <location>
        <begin position="148"/>
        <end position="168"/>
    </location>
</feature>
<feature type="compositionally biased region" description="Basic and acidic residues" evidence="3">
    <location>
        <begin position="152"/>
        <end position="168"/>
    </location>
</feature>
<feature type="glycosylation site" description="N-linked (GlcNAc...) asparagine" evidence="4 5">
    <location>
        <position position="36"/>
    </location>
</feature>
<evidence type="ECO:0000255" key="1"/>
<evidence type="ECO:0000255" key="2">
    <source>
        <dbReference type="PROSITE-ProRule" id="PRU00246"/>
    </source>
</evidence>
<evidence type="ECO:0000256" key="3">
    <source>
        <dbReference type="SAM" id="MobiDB-lite"/>
    </source>
</evidence>
<evidence type="ECO:0000269" key="4">
    <source>
    </source>
</evidence>
<evidence type="ECO:0000269" key="5">
    <source>
    </source>
</evidence>
<evidence type="ECO:0000305" key="6"/>
<organism>
    <name type="scientific">Caenorhabditis elegans</name>
    <dbReference type="NCBI Taxonomy" id="6239"/>
    <lineage>
        <taxon>Eukaryota</taxon>
        <taxon>Metazoa</taxon>
        <taxon>Ecdysozoa</taxon>
        <taxon>Nematoda</taxon>
        <taxon>Chromadorea</taxon>
        <taxon>Rhabditida</taxon>
        <taxon>Rhabditina</taxon>
        <taxon>Rhabditomorpha</taxon>
        <taxon>Rhabditoidea</taxon>
        <taxon>Rhabditidae</taxon>
        <taxon>Peloderinae</taxon>
        <taxon>Caenorhabditis</taxon>
    </lineage>
</organism>